<protein>
    <recommendedName>
        <fullName evidence="1">Urease accessory protein UreD</fullName>
    </recommendedName>
</protein>
<gene>
    <name evidence="1" type="primary">ureD</name>
    <name type="ordered locus">P9215_09221</name>
</gene>
<keyword id="KW-0143">Chaperone</keyword>
<keyword id="KW-0963">Cytoplasm</keyword>
<keyword id="KW-0996">Nickel insertion</keyword>
<accession>A8G4K6</accession>
<reference key="1">
    <citation type="journal article" date="2007" name="PLoS Genet.">
        <title>Patterns and implications of gene gain and loss in the evolution of Prochlorococcus.</title>
        <authorList>
            <person name="Kettler G.C."/>
            <person name="Martiny A.C."/>
            <person name="Huang K."/>
            <person name="Zucker J."/>
            <person name="Coleman M.L."/>
            <person name="Rodrigue S."/>
            <person name="Chen F."/>
            <person name="Lapidus A."/>
            <person name="Ferriera S."/>
            <person name="Johnson J."/>
            <person name="Steglich C."/>
            <person name="Church G.M."/>
            <person name="Richardson P."/>
            <person name="Chisholm S.W."/>
        </authorList>
    </citation>
    <scope>NUCLEOTIDE SEQUENCE [LARGE SCALE GENOMIC DNA]</scope>
    <source>
        <strain>MIT 9215</strain>
    </source>
</reference>
<dbReference type="EMBL" id="CP000825">
    <property type="protein sequence ID" value="ABV50537.1"/>
    <property type="molecule type" value="Genomic_DNA"/>
</dbReference>
<dbReference type="RefSeq" id="WP_012007633.1">
    <property type="nucleotide sequence ID" value="NC_009840.1"/>
</dbReference>
<dbReference type="SMR" id="A8G4K6"/>
<dbReference type="STRING" id="93060.P9215_09221"/>
<dbReference type="KEGG" id="pmh:P9215_09221"/>
<dbReference type="eggNOG" id="COG0829">
    <property type="taxonomic scope" value="Bacteria"/>
</dbReference>
<dbReference type="HOGENOM" id="CLU_056339_4_0_3"/>
<dbReference type="OrthoDB" id="9798842at2"/>
<dbReference type="Proteomes" id="UP000002014">
    <property type="component" value="Chromosome"/>
</dbReference>
<dbReference type="GO" id="GO:0005737">
    <property type="term" value="C:cytoplasm"/>
    <property type="evidence" value="ECO:0007669"/>
    <property type="project" value="UniProtKB-SubCell"/>
</dbReference>
<dbReference type="GO" id="GO:0016151">
    <property type="term" value="F:nickel cation binding"/>
    <property type="evidence" value="ECO:0007669"/>
    <property type="project" value="UniProtKB-UniRule"/>
</dbReference>
<dbReference type="HAMAP" id="MF_01384">
    <property type="entry name" value="UreD"/>
    <property type="match status" value="1"/>
</dbReference>
<dbReference type="InterPro" id="IPR002669">
    <property type="entry name" value="UreD"/>
</dbReference>
<dbReference type="PANTHER" id="PTHR33643">
    <property type="entry name" value="UREASE ACCESSORY PROTEIN D"/>
    <property type="match status" value="1"/>
</dbReference>
<dbReference type="PANTHER" id="PTHR33643:SF1">
    <property type="entry name" value="UREASE ACCESSORY PROTEIN D"/>
    <property type="match status" value="1"/>
</dbReference>
<dbReference type="Pfam" id="PF01774">
    <property type="entry name" value="UreD"/>
    <property type="match status" value="1"/>
</dbReference>
<feature type="chain" id="PRO_0000340475" description="Urease accessory protein UreD">
    <location>
        <begin position="1"/>
        <end position="300"/>
    </location>
</feature>
<proteinExistence type="inferred from homology"/>
<organism>
    <name type="scientific">Prochlorococcus marinus (strain MIT 9215)</name>
    <dbReference type="NCBI Taxonomy" id="93060"/>
    <lineage>
        <taxon>Bacteria</taxon>
        <taxon>Bacillati</taxon>
        <taxon>Cyanobacteriota</taxon>
        <taxon>Cyanophyceae</taxon>
        <taxon>Synechococcales</taxon>
        <taxon>Prochlorococcaceae</taxon>
        <taxon>Prochlorococcus</taxon>
    </lineage>
</organism>
<evidence type="ECO:0000255" key="1">
    <source>
        <dbReference type="HAMAP-Rule" id="MF_01384"/>
    </source>
</evidence>
<comment type="function">
    <text evidence="1">Required for maturation of urease via the functional incorporation of the urease nickel metallocenter.</text>
</comment>
<comment type="subunit">
    <text evidence="1">UreD, UreF and UreG form a complex that acts as a GTP-hydrolysis-dependent molecular chaperone, activating the urease apoprotein by helping to assemble the nickel containing metallocenter of UreC. The UreE protein probably delivers the nickel.</text>
</comment>
<comment type="subcellular location">
    <subcellularLocation>
        <location evidence="1">Cytoplasm</location>
    </subcellularLocation>
</comment>
<comment type="similarity">
    <text evidence="1">Belongs to the UreD family.</text>
</comment>
<sequence length="300" mass="33960">MIKTNWEGNCFLNFFNNKSSLENVDKTIFKSKSTSPYKLLKSTHDQEGRCILPVLHTAGGLVGGDLLEFEVNLEKNSKVLLTTSSAQKVYGSVGISKVNPKGTFSKQNNLIKILDNSHLEYLPQETIIFANGLYEQKFKVFISETSSFLFTDLIRLGRSSSGESIESGVFRSKLEIVRNNDLYDDWEYVDQIELSKASYVAKSGMDYMPVFGSLIWICEKDFSKSNINNLVGNIKKIFNETENNLSIGILENGISVRFLGSSSQDARKCFFCIWKQIRSVCGFCEPKYQGVWPLQDPMNY</sequence>
<name>URED_PROM2</name>